<organism>
    <name type="scientific">Brucella abortus (strain 2308)</name>
    <dbReference type="NCBI Taxonomy" id="359391"/>
    <lineage>
        <taxon>Bacteria</taxon>
        <taxon>Pseudomonadati</taxon>
        <taxon>Pseudomonadota</taxon>
        <taxon>Alphaproteobacteria</taxon>
        <taxon>Hyphomicrobiales</taxon>
        <taxon>Brucellaceae</taxon>
        <taxon>Brucella/Ochrobactrum group</taxon>
        <taxon>Brucella</taxon>
    </lineage>
</organism>
<reference key="1">
    <citation type="journal article" date="2005" name="Infect. Immun.">
        <title>Whole-genome analyses of speciation events in pathogenic Brucellae.</title>
        <authorList>
            <person name="Chain P.S."/>
            <person name="Comerci D.J."/>
            <person name="Tolmasky M.E."/>
            <person name="Larimer F.W."/>
            <person name="Malfatti S.A."/>
            <person name="Vergez L.M."/>
            <person name="Aguero F."/>
            <person name="Land M.L."/>
            <person name="Ugalde R.A."/>
            <person name="Garcia E."/>
        </authorList>
    </citation>
    <scope>NUCLEOTIDE SEQUENCE [LARGE SCALE GENOMIC DNA]</scope>
    <source>
        <strain>2308</strain>
    </source>
</reference>
<dbReference type="EC" id="2.7.2.11" evidence="1"/>
<dbReference type="EMBL" id="AM040264">
    <property type="protein sequence ID" value="CAJ11808.1"/>
    <property type="molecule type" value="Genomic_DNA"/>
</dbReference>
<dbReference type="RefSeq" id="WP_002964922.1">
    <property type="nucleotide sequence ID" value="NZ_KN046823.1"/>
</dbReference>
<dbReference type="SMR" id="Q2YLM3"/>
<dbReference type="STRING" id="359391.BAB1_1852"/>
<dbReference type="GeneID" id="93017819"/>
<dbReference type="KEGG" id="bmf:BAB1_1852"/>
<dbReference type="PATRIC" id="fig|359391.11.peg.367"/>
<dbReference type="HOGENOM" id="CLU_025400_2_0_5"/>
<dbReference type="PhylomeDB" id="Q2YLM3"/>
<dbReference type="UniPathway" id="UPA00098">
    <property type="reaction ID" value="UER00359"/>
</dbReference>
<dbReference type="Proteomes" id="UP000002719">
    <property type="component" value="Chromosome I"/>
</dbReference>
<dbReference type="GO" id="GO:0005829">
    <property type="term" value="C:cytosol"/>
    <property type="evidence" value="ECO:0007669"/>
    <property type="project" value="TreeGrafter"/>
</dbReference>
<dbReference type="GO" id="GO:0005524">
    <property type="term" value="F:ATP binding"/>
    <property type="evidence" value="ECO:0007669"/>
    <property type="project" value="UniProtKB-KW"/>
</dbReference>
<dbReference type="GO" id="GO:0004349">
    <property type="term" value="F:glutamate 5-kinase activity"/>
    <property type="evidence" value="ECO:0007669"/>
    <property type="project" value="UniProtKB-UniRule"/>
</dbReference>
<dbReference type="GO" id="GO:0003723">
    <property type="term" value="F:RNA binding"/>
    <property type="evidence" value="ECO:0007669"/>
    <property type="project" value="InterPro"/>
</dbReference>
<dbReference type="GO" id="GO:0055129">
    <property type="term" value="P:L-proline biosynthetic process"/>
    <property type="evidence" value="ECO:0007669"/>
    <property type="project" value="UniProtKB-UniRule"/>
</dbReference>
<dbReference type="CDD" id="cd04242">
    <property type="entry name" value="AAK_G5K_ProB"/>
    <property type="match status" value="1"/>
</dbReference>
<dbReference type="CDD" id="cd21157">
    <property type="entry name" value="PUA_G5K"/>
    <property type="match status" value="1"/>
</dbReference>
<dbReference type="FunFam" id="2.30.130.10:FF:000007">
    <property type="entry name" value="Glutamate 5-kinase"/>
    <property type="match status" value="1"/>
</dbReference>
<dbReference type="FunFam" id="3.40.1160.10:FF:000018">
    <property type="entry name" value="Glutamate 5-kinase"/>
    <property type="match status" value="1"/>
</dbReference>
<dbReference type="Gene3D" id="3.40.1160.10">
    <property type="entry name" value="Acetylglutamate kinase-like"/>
    <property type="match status" value="1"/>
</dbReference>
<dbReference type="Gene3D" id="2.30.130.10">
    <property type="entry name" value="PUA domain"/>
    <property type="match status" value="1"/>
</dbReference>
<dbReference type="HAMAP" id="MF_00456">
    <property type="entry name" value="ProB"/>
    <property type="match status" value="1"/>
</dbReference>
<dbReference type="InterPro" id="IPR036393">
    <property type="entry name" value="AceGlu_kinase-like_sf"/>
</dbReference>
<dbReference type="InterPro" id="IPR001048">
    <property type="entry name" value="Asp/Glu/Uridylate_kinase"/>
</dbReference>
<dbReference type="InterPro" id="IPR041739">
    <property type="entry name" value="G5K_ProB"/>
</dbReference>
<dbReference type="InterPro" id="IPR001057">
    <property type="entry name" value="Glu/AcGlu_kinase"/>
</dbReference>
<dbReference type="InterPro" id="IPR011529">
    <property type="entry name" value="Glu_5kinase"/>
</dbReference>
<dbReference type="InterPro" id="IPR005715">
    <property type="entry name" value="Glu_5kinase/COase_Synthase"/>
</dbReference>
<dbReference type="InterPro" id="IPR019797">
    <property type="entry name" value="Glutamate_5-kinase_CS"/>
</dbReference>
<dbReference type="InterPro" id="IPR002478">
    <property type="entry name" value="PUA"/>
</dbReference>
<dbReference type="InterPro" id="IPR015947">
    <property type="entry name" value="PUA-like_sf"/>
</dbReference>
<dbReference type="InterPro" id="IPR036974">
    <property type="entry name" value="PUA_sf"/>
</dbReference>
<dbReference type="NCBIfam" id="TIGR01027">
    <property type="entry name" value="proB"/>
    <property type="match status" value="1"/>
</dbReference>
<dbReference type="PANTHER" id="PTHR43654">
    <property type="entry name" value="GLUTAMATE 5-KINASE"/>
    <property type="match status" value="1"/>
</dbReference>
<dbReference type="PANTHER" id="PTHR43654:SF1">
    <property type="entry name" value="ISOPENTENYL PHOSPHATE KINASE"/>
    <property type="match status" value="1"/>
</dbReference>
<dbReference type="Pfam" id="PF00696">
    <property type="entry name" value="AA_kinase"/>
    <property type="match status" value="1"/>
</dbReference>
<dbReference type="Pfam" id="PF01472">
    <property type="entry name" value="PUA"/>
    <property type="match status" value="1"/>
</dbReference>
<dbReference type="PIRSF" id="PIRSF000729">
    <property type="entry name" value="GK"/>
    <property type="match status" value="1"/>
</dbReference>
<dbReference type="PRINTS" id="PR00474">
    <property type="entry name" value="GLU5KINASE"/>
</dbReference>
<dbReference type="SMART" id="SM00359">
    <property type="entry name" value="PUA"/>
    <property type="match status" value="1"/>
</dbReference>
<dbReference type="SUPFAM" id="SSF53633">
    <property type="entry name" value="Carbamate kinase-like"/>
    <property type="match status" value="1"/>
</dbReference>
<dbReference type="SUPFAM" id="SSF88697">
    <property type="entry name" value="PUA domain-like"/>
    <property type="match status" value="1"/>
</dbReference>
<dbReference type="PROSITE" id="PS00902">
    <property type="entry name" value="GLUTAMATE_5_KINASE"/>
    <property type="match status" value="1"/>
</dbReference>
<dbReference type="PROSITE" id="PS50890">
    <property type="entry name" value="PUA"/>
    <property type="match status" value="1"/>
</dbReference>
<feature type="chain" id="PRO_0000230037" description="Glutamate 5-kinase">
    <location>
        <begin position="1"/>
        <end position="378"/>
    </location>
</feature>
<feature type="domain" description="PUA" evidence="1">
    <location>
        <begin position="279"/>
        <end position="356"/>
    </location>
</feature>
<feature type="binding site" evidence="1">
    <location>
        <position position="14"/>
    </location>
    <ligand>
        <name>ATP</name>
        <dbReference type="ChEBI" id="CHEBI:30616"/>
    </ligand>
</feature>
<feature type="binding site" evidence="1">
    <location>
        <position position="54"/>
    </location>
    <ligand>
        <name>substrate</name>
    </ligand>
</feature>
<feature type="binding site" evidence="1">
    <location>
        <position position="141"/>
    </location>
    <ligand>
        <name>substrate</name>
    </ligand>
</feature>
<feature type="binding site" evidence="1">
    <location>
        <position position="153"/>
    </location>
    <ligand>
        <name>substrate</name>
    </ligand>
</feature>
<feature type="binding site" evidence="1">
    <location>
        <begin position="173"/>
        <end position="174"/>
    </location>
    <ligand>
        <name>ATP</name>
        <dbReference type="ChEBI" id="CHEBI:30616"/>
    </ligand>
</feature>
<comment type="function">
    <text evidence="1">Catalyzes the transfer of a phosphate group to glutamate to form L-glutamate 5-phosphate.</text>
</comment>
<comment type="catalytic activity">
    <reaction evidence="1">
        <text>L-glutamate + ATP = L-glutamyl 5-phosphate + ADP</text>
        <dbReference type="Rhea" id="RHEA:14877"/>
        <dbReference type="ChEBI" id="CHEBI:29985"/>
        <dbReference type="ChEBI" id="CHEBI:30616"/>
        <dbReference type="ChEBI" id="CHEBI:58274"/>
        <dbReference type="ChEBI" id="CHEBI:456216"/>
        <dbReference type="EC" id="2.7.2.11"/>
    </reaction>
</comment>
<comment type="pathway">
    <text evidence="1">Amino-acid biosynthesis; L-proline biosynthesis; L-glutamate 5-semialdehyde from L-glutamate: step 1/2.</text>
</comment>
<comment type="subcellular location">
    <subcellularLocation>
        <location evidence="1">Cytoplasm</location>
    </subcellularLocation>
</comment>
<comment type="similarity">
    <text evidence="1">Belongs to the glutamate 5-kinase family.</text>
</comment>
<gene>
    <name evidence="1" type="primary">proB</name>
    <name type="ordered locus">BAB1_1852</name>
</gene>
<evidence type="ECO:0000255" key="1">
    <source>
        <dbReference type="HAMAP-Rule" id="MF_00456"/>
    </source>
</evidence>
<proteinExistence type="inferred from homology"/>
<accession>Q2YLM3</accession>
<name>PROB_BRUA2</name>
<keyword id="KW-0028">Amino-acid biosynthesis</keyword>
<keyword id="KW-0067">ATP-binding</keyword>
<keyword id="KW-0963">Cytoplasm</keyword>
<keyword id="KW-0418">Kinase</keyword>
<keyword id="KW-0547">Nucleotide-binding</keyword>
<keyword id="KW-0641">Proline biosynthesis</keyword>
<keyword id="KW-1185">Reference proteome</keyword>
<keyword id="KW-0808">Transferase</keyword>
<sequence length="378" mass="39873">MLKKLKDYRRIVVKIGSALLVDRATGLKRKWLESLGQDIAALQHAGVEVLVVSSGAIALGRTVLGLPKKALKLEESQAAAAAGQIALAKAYADVLGGHGIKSGQILVTLSDTEERRRYLNARATIETLLKLKAVPIINENDTVATTEIRYGDNDRLAARVATMMGADLLILLSDIDGLYTAPPHKNPDAQFLPFVETITPQIEAMAGAAASELSRGGMKTKLDAGKIANAAGTAMIITSGTRFGPLSAIDRGERATLFEAAHAPVNAWKTWISGNLEPAGRLTVDAGAVKALKSGKSLLPAGVKEVDGDFERGDTVAVMNEDGREIARGLIAYDAADARKVAGHKSDEISAILGYDARAAMIHRNDLVVRAASDAKAA</sequence>
<protein>
    <recommendedName>
        <fullName evidence="1">Glutamate 5-kinase</fullName>
        <ecNumber evidence="1">2.7.2.11</ecNumber>
    </recommendedName>
    <alternativeName>
        <fullName evidence="1">Gamma-glutamyl kinase</fullName>
        <shortName evidence="1">GK</shortName>
    </alternativeName>
</protein>